<protein>
    <recommendedName>
        <fullName>Transmembrane protein 54</fullName>
    </recommendedName>
    <alternativeName>
        <fullName>Beta-casein-like protein</fullName>
    </alternativeName>
    <alternativeName>
        <fullName>Protein CAC-1</fullName>
    </alternativeName>
</protein>
<proteinExistence type="evidence at protein level"/>
<feature type="chain" id="PRO_0000226989" description="Transmembrane protein 54">
    <location>
        <begin position="1"/>
        <end position="222"/>
    </location>
</feature>
<feature type="transmembrane region" description="Helical" evidence="1">
    <location>
        <begin position="22"/>
        <end position="42"/>
    </location>
</feature>
<feature type="transmembrane region" description="Helical" evidence="1">
    <location>
        <begin position="62"/>
        <end position="82"/>
    </location>
</feature>
<feature type="transmembrane region" description="Helical" evidence="1">
    <location>
        <begin position="100"/>
        <end position="120"/>
    </location>
</feature>
<feature type="transmembrane region" description="Helical" evidence="1">
    <location>
        <begin position="155"/>
        <end position="175"/>
    </location>
</feature>
<feature type="splice variant" id="VSP_017533" description="In isoform 3." evidence="3">
    <location>
        <begin position="71"/>
        <end position="123"/>
    </location>
</feature>
<feature type="splice variant" id="VSP_017532" description="In isoform 2." evidence="4">
    <location>
        <begin position="71"/>
        <end position="90"/>
    </location>
</feature>
<feature type="sequence variant" id="VAR_052342" description="In dbSNP:rs10914632.">
    <original>L</original>
    <variation>F</variation>
    <location>
        <position position="110"/>
    </location>
</feature>
<feature type="sequence conflict" description="In Ref. 4; BAA87335." evidence="5" ref="4">
    <original>D</original>
    <variation>Y</variation>
    <location>
        <position position="144"/>
    </location>
</feature>
<feature type="sequence conflict" description="In Ref. 4; BAA87335." evidence="5" ref="4">
    <original>V</original>
    <variation>G</variation>
    <location>
        <position position="172"/>
    </location>
</feature>
<sequence>MCLRLGGLSVGDFRKVLMKTGLVLVVLGHVSFITAALFHGTVLRYVGTPQDAVALQYCVVNILSVTSAIVVITSGIAAIVLSRYLPSTPLRWTVFSSSVACALLSLTCALGLLASIAMTFATQGKALLAACTFGSSELLALAPDCPFDPTRIYSSSLCLWGIALVLCVAENVFAVRCAQLTHQLLELRPWWGKSSHHMMRENPELVEGRDLLSCTSSEPLTL</sequence>
<reference key="1">
    <citation type="journal article" date="2001" name="Biochem. Biophys. Res. Commun.">
        <title>Cloning and characterization of a tumor-associated antigen, beta-casein-like protein.</title>
        <authorList>
            <person name="Baba T."/>
            <person name="Koizumi M."/>
            <person name="Suzuki T."/>
            <person name="Yamanaka I."/>
            <person name="Yamashita S."/>
            <person name="Kudo R."/>
        </authorList>
    </citation>
    <scope>NUCLEOTIDE SEQUENCE [MRNA] (ISOFORM 1)</scope>
    <scope>TISSUE SPECIFICITY</scope>
</reference>
<reference key="2">
    <citation type="submission" date="2003-08" db="EMBL/GenBank/DDBJ databases">
        <authorList>
            <person name="Li H."/>
            <person name="Huang F."/>
            <person name="Yu R."/>
            <person name="Zhou G."/>
            <person name="Ke R."/>
            <person name="Shen C."/>
            <person name="Zhong G."/>
            <person name="Lin L."/>
            <person name="Yang S."/>
        </authorList>
    </citation>
    <scope>NUCLEOTIDE SEQUENCE [MRNA] (ISOFORM 2)</scope>
</reference>
<reference key="3">
    <citation type="journal article" date="2004" name="Genome Res.">
        <title>The status, quality, and expansion of the NIH full-length cDNA project: the Mammalian Gene Collection (MGC).</title>
        <authorList>
            <consortium name="The MGC Project Team"/>
        </authorList>
    </citation>
    <scope>NUCLEOTIDE SEQUENCE [LARGE SCALE MRNA] (ISOFORMS 1 AND 3)</scope>
    <source>
        <tissue>Brain</tissue>
        <tissue>Colon</tissue>
        <tissue>Ovary</tissue>
    </source>
</reference>
<reference key="4">
    <citation type="journal article" date="1998" name="Cancer Lett.">
        <title>Cloning and characterization of a cDNA fragment coding beta-casein-like protein preferentially expressed in cervical adenocarcinoma cell line CAC-1.</title>
        <authorList>
            <person name="Suzuki T."/>
            <person name="Koizumi M."/>
            <person name="Baba T."/>
            <person name="Kudo R."/>
        </authorList>
    </citation>
    <scope>NUCLEOTIDE SEQUENCE [MRNA] OF 74-222</scope>
</reference>
<keyword id="KW-0025">Alternative splicing</keyword>
<keyword id="KW-0472">Membrane</keyword>
<keyword id="KW-1267">Proteomics identification</keyword>
<keyword id="KW-1185">Reference proteome</keyword>
<keyword id="KW-0812">Transmembrane</keyword>
<keyword id="KW-1133">Transmembrane helix</keyword>
<comment type="interaction">
    <interactant intactId="EBI-3922833">
        <id>Q969K7</id>
    </interactant>
    <interactant intactId="EBI-11343438">
        <id>Q3SXY8</id>
        <label>ARL13B</label>
    </interactant>
    <organismsDiffer>false</organismsDiffer>
    <experiments>3</experiments>
</comment>
<comment type="interaction">
    <interactant intactId="EBI-3922833">
        <id>Q969K7</id>
    </interactant>
    <interactant intactId="EBI-3862428">
        <id>P09693</id>
        <label>CD3G</label>
    </interactant>
    <organismsDiffer>false</organismsDiffer>
    <experiments>3</experiments>
</comment>
<comment type="interaction">
    <interactant intactId="EBI-3922833">
        <id>Q969K7</id>
    </interactant>
    <interactant intactId="EBI-11291074">
        <id>Q9BQT9</id>
        <label>CLSTN3</label>
    </interactant>
    <organismsDiffer>false</organismsDiffer>
    <experiments>3</experiments>
</comment>
<comment type="interaction">
    <interactant intactId="EBI-3922833">
        <id>Q969K7</id>
    </interactant>
    <interactant intactId="EBI-3918971">
        <id>Q9Y680</id>
        <label>FKBP7</label>
    </interactant>
    <organismsDiffer>false</organismsDiffer>
    <experiments>3</experiments>
</comment>
<comment type="interaction">
    <interactant intactId="EBI-3922833">
        <id>Q969K7</id>
    </interactant>
    <interactant intactId="EBI-13345167">
        <id>Q8TDT2</id>
        <label>GPR152</label>
    </interactant>
    <organismsDiffer>false</organismsDiffer>
    <experiments>3</experiments>
</comment>
<comment type="interaction">
    <interactant intactId="EBI-3922833">
        <id>Q969K7</id>
    </interactant>
    <interactant intactId="EBI-2927498">
        <id>O60883</id>
        <label>GPR37L1</label>
    </interactant>
    <organismsDiffer>false</organismsDiffer>
    <experiments>3</experiments>
</comment>
<comment type="interaction">
    <interactant intactId="EBI-3922833">
        <id>Q969K7</id>
    </interactant>
    <interactant intactId="EBI-399080">
        <id>Q92993</id>
        <label>KAT5</label>
    </interactant>
    <organismsDiffer>false</organismsDiffer>
    <experiments>3</experiments>
</comment>
<comment type="interaction">
    <interactant intactId="EBI-3922833">
        <id>Q969K7</id>
    </interactant>
    <interactant intactId="EBI-17440235">
        <id>Q15842</id>
        <label>KCNJ8</label>
    </interactant>
    <organismsDiffer>false</organismsDiffer>
    <experiments>3</experiments>
</comment>
<comment type="interaction">
    <interactant intactId="EBI-3922833">
        <id>Q969K7</id>
    </interactant>
    <interactant intactId="EBI-3934936">
        <id>O95279</id>
        <label>KCNK5</label>
    </interactant>
    <organismsDiffer>false</organismsDiffer>
    <experiments>3</experiments>
</comment>
<comment type="interaction">
    <interactant intactId="EBI-3922833">
        <id>Q969K7</id>
    </interactant>
    <interactant intactId="EBI-9018187">
        <id>P26715</id>
        <label>KLRC1</label>
    </interactant>
    <organismsDiffer>false</organismsDiffer>
    <experiments>3</experiments>
</comment>
<comment type="interaction">
    <interactant intactId="EBI-3922833">
        <id>Q969K7</id>
    </interactant>
    <interactant intactId="EBI-11742507">
        <id>Q8TAP4-4</id>
        <label>LMO3</label>
    </interactant>
    <organismsDiffer>false</organismsDiffer>
    <experiments>3</experiments>
</comment>
<comment type="interaction">
    <interactant intactId="EBI-3922833">
        <id>Q969K7</id>
    </interactant>
    <interactant intactId="EBI-12839612">
        <id>Q96JA4</id>
        <label>MS4A14</label>
    </interactant>
    <organismsDiffer>false</organismsDiffer>
    <experiments>3</experiments>
</comment>
<comment type="interaction">
    <interactant intactId="EBI-3922833">
        <id>Q969K7</id>
    </interactant>
    <interactant intactId="EBI-12842334">
        <id>Q02297-10</id>
        <label>NRG1</label>
    </interactant>
    <organismsDiffer>false</organismsDiffer>
    <experiments>3</experiments>
</comment>
<comment type="interaction">
    <interactant intactId="EBI-3922833">
        <id>Q969K7</id>
    </interactant>
    <interactant intactId="EBI-752074">
        <id>P41219</id>
        <label>PRPH</label>
    </interactant>
    <organismsDiffer>false</organismsDiffer>
    <experiments>3</experiments>
</comment>
<comment type="interaction">
    <interactant intactId="EBI-3922833">
        <id>Q969K7</id>
    </interactant>
    <interactant intactId="EBI-3919694">
        <id>P15151</id>
        <label>PVR</label>
    </interactant>
    <organismsDiffer>false</organismsDiffer>
    <experiments>3</experiments>
</comment>
<comment type="interaction">
    <interactant intactId="EBI-3922833">
        <id>Q969K7</id>
    </interactant>
    <interactant intactId="EBI-9090795">
        <id>Q15047-2</id>
        <label>SETDB1</label>
    </interactant>
    <organismsDiffer>false</organismsDiffer>
    <experiments>3</experiments>
</comment>
<comment type="interaction">
    <interactant intactId="EBI-3922833">
        <id>Q969K7</id>
    </interactant>
    <interactant intactId="EBI-12854384">
        <id>Q9Y666-2</id>
        <label>SLC12A7</label>
    </interactant>
    <organismsDiffer>false</organismsDiffer>
    <experiments>3</experiments>
</comment>
<comment type="interaction">
    <interactant intactId="EBI-3922833">
        <id>Q969K7</id>
    </interactant>
    <interactant intactId="EBI-12898013">
        <id>Q9NP94</id>
        <label>SLC39A2</label>
    </interactant>
    <organismsDiffer>false</organismsDiffer>
    <experiments>3</experiments>
</comment>
<comment type="interaction">
    <interactant intactId="EBI-3922833">
        <id>Q969K7</id>
    </interactant>
    <interactant intactId="EBI-6268651">
        <id>Q9NPL8</id>
        <label>TIMMDC1</label>
    </interactant>
    <organismsDiffer>false</organismsDiffer>
    <experiments>3</experiments>
</comment>
<comment type="interaction">
    <interactant intactId="EBI-3922833">
        <id>Q969K7</id>
    </interactant>
    <interactant intactId="EBI-18178701">
        <id>Q4KMG9</id>
        <label>TMEM52B</label>
    </interactant>
    <organismsDiffer>false</organismsDiffer>
    <experiments>3</experiments>
</comment>
<comment type="interaction">
    <interactant intactId="EBI-3922833">
        <id>Q969K7</id>
    </interactant>
    <interactant intactId="EBI-12195249">
        <id>Q5TGU0</id>
        <label>TSPO2</label>
    </interactant>
    <organismsDiffer>false</organismsDiffer>
    <experiments>3</experiments>
</comment>
<comment type="interaction">
    <interactant intactId="EBI-3922833">
        <id>Q969K7</id>
    </interactant>
    <interactant intactId="EBI-12237619">
        <id>O75841</id>
        <label>UPK1B</label>
    </interactant>
    <organismsDiffer>false</organismsDiffer>
    <experiments>3</experiments>
</comment>
<comment type="interaction">
    <interactant intactId="EBI-3922833">
        <id>Q969K7</id>
    </interactant>
    <interactant intactId="EBI-359832">
        <id>P61981</id>
        <label>YWHAG</label>
    </interactant>
    <organismsDiffer>false</organismsDiffer>
    <experiments>3</experiments>
</comment>
<comment type="subcellular location">
    <subcellularLocation>
        <location evidence="5">Membrane</location>
        <topology evidence="5">Multi-pass membrane protein</topology>
    </subcellularLocation>
</comment>
<comment type="alternative products">
    <event type="alternative splicing"/>
    <isoform>
        <id>Q969K7-1</id>
        <name>1</name>
        <sequence type="displayed"/>
    </isoform>
    <isoform>
        <id>Q969K7-2</id>
        <name>2</name>
        <sequence type="described" ref="VSP_017532"/>
    </isoform>
    <isoform>
        <id>Q969K7-3</id>
        <name>3</name>
        <sequence type="described" ref="VSP_017533"/>
    </isoform>
</comment>
<comment type="tissue specificity">
    <text evidence="2">Ubiquitously expressed in cancer cell lines.</text>
</comment>
<comment type="similarity">
    <text evidence="5">Belongs to the TMEM54 family.</text>
</comment>
<comment type="sequence caution" evidence="5">
    <conflict type="frameshift">
        <sequence resource="EMBL-CDS" id="BAA87335"/>
    </conflict>
</comment>
<name>TMM54_HUMAN</name>
<evidence type="ECO:0000255" key="1"/>
<evidence type="ECO:0000269" key="2">
    <source>
    </source>
</evidence>
<evidence type="ECO:0000303" key="3">
    <source>
    </source>
</evidence>
<evidence type="ECO:0000303" key="4">
    <source ref="2"/>
</evidence>
<evidence type="ECO:0000305" key="5"/>
<organism>
    <name type="scientific">Homo sapiens</name>
    <name type="common">Human</name>
    <dbReference type="NCBI Taxonomy" id="9606"/>
    <lineage>
        <taxon>Eukaryota</taxon>
        <taxon>Metazoa</taxon>
        <taxon>Chordata</taxon>
        <taxon>Craniata</taxon>
        <taxon>Vertebrata</taxon>
        <taxon>Euteleostomi</taxon>
        <taxon>Mammalia</taxon>
        <taxon>Eutheria</taxon>
        <taxon>Euarchontoglires</taxon>
        <taxon>Primates</taxon>
        <taxon>Haplorrhini</taxon>
        <taxon>Catarrhini</taxon>
        <taxon>Hominidae</taxon>
        <taxon>Homo</taxon>
    </lineage>
</organism>
<accession>Q969K7</accession>
<accession>Q6UV18</accession>
<accession>Q8IVD0</accession>
<accession>Q9UM12</accession>
<gene>
    <name type="primary">TMEM54</name>
    <name type="synonym">BCLP</name>
    <name type="synonym">CAC1</name>
</gene>
<dbReference type="EMBL" id="AY027543">
    <property type="protein sequence ID" value="AAK13050.1"/>
    <property type="molecule type" value="mRNA"/>
</dbReference>
<dbReference type="EMBL" id="AY359883">
    <property type="protein sequence ID" value="AAQ64021.1"/>
    <property type="molecule type" value="mRNA"/>
</dbReference>
<dbReference type="EMBL" id="BC001418">
    <property type="protein sequence ID" value="AAH01418.2"/>
    <property type="molecule type" value="mRNA"/>
</dbReference>
<dbReference type="EMBL" id="BC013953">
    <property type="protein sequence ID" value="AAH13953.1"/>
    <property type="molecule type" value="mRNA"/>
</dbReference>
<dbReference type="EMBL" id="BC023260">
    <property type="protein sequence ID" value="AAH23260.1"/>
    <property type="molecule type" value="mRNA"/>
</dbReference>
<dbReference type="EMBL" id="AB012692">
    <property type="protein sequence ID" value="BAA87335.1"/>
    <property type="status" value="ALT_FRAME"/>
    <property type="molecule type" value="mRNA"/>
</dbReference>
<dbReference type="CCDS" id="CCDS371.1">
    <molecule id="Q969K7-1"/>
</dbReference>
<dbReference type="CCDS" id="CCDS85954.1">
    <molecule id="Q969K7-3"/>
</dbReference>
<dbReference type="PIR" id="JC7697">
    <property type="entry name" value="JC7697"/>
</dbReference>
<dbReference type="RefSeq" id="NP_001316652.1">
    <molecule id="Q969K7-2"/>
    <property type="nucleotide sequence ID" value="NM_001329723.2"/>
</dbReference>
<dbReference type="RefSeq" id="NP_001316653.1">
    <property type="nucleotide sequence ID" value="NM_001329724.1"/>
</dbReference>
<dbReference type="RefSeq" id="NP_001316654.1">
    <molecule id="Q969K7-3"/>
    <property type="nucleotide sequence ID" value="NM_001329725.2"/>
</dbReference>
<dbReference type="RefSeq" id="NP_277039.1">
    <molecule id="Q969K7-1"/>
    <property type="nucleotide sequence ID" value="NM_033504.4"/>
</dbReference>
<dbReference type="BioGRID" id="125247">
    <property type="interactions" value="28"/>
</dbReference>
<dbReference type="FunCoup" id="Q969K7">
    <property type="interactions" value="9"/>
</dbReference>
<dbReference type="IntAct" id="Q969K7">
    <property type="interactions" value="26"/>
</dbReference>
<dbReference type="MINT" id="Q969K7"/>
<dbReference type="STRING" id="9606.ENSP00000362562"/>
<dbReference type="iPTMnet" id="Q969K7"/>
<dbReference type="PhosphoSitePlus" id="Q969K7"/>
<dbReference type="SwissPalm" id="Q969K7"/>
<dbReference type="BioMuta" id="TMEM54"/>
<dbReference type="DMDM" id="74760680"/>
<dbReference type="jPOST" id="Q969K7"/>
<dbReference type="MassIVE" id="Q969K7"/>
<dbReference type="PaxDb" id="9606-ENSP00000362562"/>
<dbReference type="PeptideAtlas" id="Q969K7"/>
<dbReference type="ProteomicsDB" id="75785">
    <molecule id="Q969K7-1"/>
</dbReference>
<dbReference type="ProteomicsDB" id="75786">
    <molecule id="Q969K7-2"/>
</dbReference>
<dbReference type="ProteomicsDB" id="75787">
    <molecule id="Q969K7-3"/>
</dbReference>
<dbReference type="Antibodypedia" id="31378">
    <property type="antibodies" value="19 antibodies from 10 providers"/>
</dbReference>
<dbReference type="DNASU" id="113452"/>
<dbReference type="Ensembl" id="ENST00000329151.5">
    <molecule id="Q969K7-3"/>
    <property type="protein sequence ID" value="ENSP00000328630.5"/>
    <property type="gene ID" value="ENSG00000121900.19"/>
</dbReference>
<dbReference type="Ensembl" id="ENST00000373463.8">
    <molecule id="Q969K7-1"/>
    <property type="protein sequence ID" value="ENSP00000362562.3"/>
    <property type="gene ID" value="ENSG00000121900.19"/>
</dbReference>
<dbReference type="GeneID" id="113452"/>
<dbReference type="KEGG" id="hsa:113452"/>
<dbReference type="MANE-Select" id="ENST00000373463.8">
    <property type="protein sequence ID" value="ENSP00000362562.3"/>
    <property type="RefSeq nucleotide sequence ID" value="NM_033504.4"/>
    <property type="RefSeq protein sequence ID" value="NP_277039.1"/>
</dbReference>
<dbReference type="UCSC" id="uc001bwi.2">
    <molecule id="Q969K7-1"/>
    <property type="organism name" value="human"/>
</dbReference>
<dbReference type="AGR" id="HGNC:24143"/>
<dbReference type="CTD" id="113452"/>
<dbReference type="DisGeNET" id="113452"/>
<dbReference type="GeneCards" id="TMEM54"/>
<dbReference type="HGNC" id="HGNC:24143">
    <property type="gene designation" value="TMEM54"/>
</dbReference>
<dbReference type="HPA" id="ENSG00000121900">
    <property type="expression patterns" value="Tissue enhanced (intestine)"/>
</dbReference>
<dbReference type="neXtProt" id="NX_Q969K7"/>
<dbReference type="OpenTargets" id="ENSG00000121900"/>
<dbReference type="PharmGKB" id="PA142670770"/>
<dbReference type="VEuPathDB" id="HostDB:ENSG00000121900"/>
<dbReference type="eggNOG" id="ENOG502S0UN">
    <property type="taxonomic scope" value="Eukaryota"/>
</dbReference>
<dbReference type="GeneTree" id="ENSGT00390000004700"/>
<dbReference type="HOGENOM" id="CLU_089663_1_0_1"/>
<dbReference type="InParanoid" id="Q969K7"/>
<dbReference type="OMA" id="YVAGPHD"/>
<dbReference type="OrthoDB" id="9389418at2759"/>
<dbReference type="PAN-GO" id="Q969K7">
    <property type="GO annotations" value="0 GO annotations based on evolutionary models"/>
</dbReference>
<dbReference type="PhylomeDB" id="Q969K7"/>
<dbReference type="TreeFam" id="TF332771"/>
<dbReference type="PathwayCommons" id="Q969K7"/>
<dbReference type="SignaLink" id="Q969K7"/>
<dbReference type="BioGRID-ORCS" id="113452">
    <property type="hits" value="15 hits in 1166 CRISPR screens"/>
</dbReference>
<dbReference type="ChiTaRS" id="TMEM54">
    <property type="organism name" value="human"/>
</dbReference>
<dbReference type="GenomeRNAi" id="113452"/>
<dbReference type="Pharos" id="Q969K7">
    <property type="development level" value="Tdark"/>
</dbReference>
<dbReference type="PRO" id="PR:Q969K7"/>
<dbReference type="Proteomes" id="UP000005640">
    <property type="component" value="Chromosome 1"/>
</dbReference>
<dbReference type="RNAct" id="Q969K7">
    <property type="molecule type" value="protein"/>
</dbReference>
<dbReference type="Bgee" id="ENSG00000121900">
    <property type="expression patterns" value="Expressed in mucosa of transverse colon and 143 other cell types or tissues"/>
</dbReference>
<dbReference type="GO" id="GO:0016020">
    <property type="term" value="C:membrane"/>
    <property type="evidence" value="ECO:0007669"/>
    <property type="project" value="UniProtKB-SubCell"/>
</dbReference>
<dbReference type="InterPro" id="IPR020977">
    <property type="entry name" value="Beta-casein-like"/>
</dbReference>
<dbReference type="PANTHER" id="PTHR31258">
    <property type="entry name" value="KERATINOCYTE-ASSOCIATED PROTEIN 3"/>
    <property type="match status" value="1"/>
</dbReference>
<dbReference type="PANTHER" id="PTHR31258:SF2">
    <property type="entry name" value="TRANSMEMBRANE PROTEIN 54"/>
    <property type="match status" value="1"/>
</dbReference>
<dbReference type="Pfam" id="PF12304">
    <property type="entry name" value="BCLP"/>
    <property type="match status" value="1"/>
</dbReference>